<evidence type="ECO:0000250" key="1">
    <source>
        <dbReference type="UniProtKB" id="P0CK64"/>
    </source>
</evidence>
<evidence type="ECO:0000250" key="2">
    <source>
        <dbReference type="UniProtKB" id="P0CK68"/>
    </source>
</evidence>
<evidence type="ECO:0000250" key="3">
    <source>
        <dbReference type="UniProtKB" id="P0DJW8"/>
    </source>
</evidence>
<evidence type="ECO:0000250" key="4">
    <source>
        <dbReference type="UniProtKB" id="P0DXO5"/>
    </source>
</evidence>
<evidence type="ECO:0000305" key="5"/>
<comment type="function">
    <text evidence="1 4">Plays a major role in the shutoff of the host protein expression by cleaving mRNAs probably via an endonuclease activity. This host shutoff allows the virus to escape from the host antiviral response (By similarity). Hijacks host RNA splicing machinery to selectively target host RNAs containing introns for destruction. This may explain the preferential degradation of RNAs that have undergone co- or post-transcriptional processing (By similarity).</text>
</comment>
<comment type="subcellular location">
    <subcellularLocation>
        <location evidence="4">Host cytoplasm</location>
    </subcellularLocation>
    <subcellularLocation>
        <location evidence="4">Host nucleus</location>
    </subcellularLocation>
</comment>
<comment type="alternative products">
    <event type="ribosomal frameshifting"/>
    <isoform>
        <id>P0DJV8-1</id>
        <name>PA-X</name>
        <sequence type="displayed"/>
    </isoform>
    <isoform>
        <id>Q20P00-1</id>
        <name>PA</name>
        <sequence type="external"/>
    </isoform>
</comment>
<comment type="domain">
    <text evidence="1 4">The probable endonuclease active site in the N-terminus and the basic amino acid cluster in the C-terminus are important for the shutoff activity. The C-terminus acts as a nuclear localization signal (By similarity). The C-terminus is recruited to host protein complexes involved in nuclear Pol II RNA processing (By similarity).</text>
</comment>
<comment type="similarity">
    <text evidence="5">Belongs to the influenza viruses PA-X family.</text>
</comment>
<sequence length="252" mass="29261">MEDFVRQCFNPMIVELAEKAMKEYGEDPKIETNKFAAICTHLEVCFMYSDFHFIDERGESIIVESGDPNALLKHRFEIIEGRDRTMAWTVVNSICNTTGVEKPKFLPDLYDYKGNRFIEIGVTRREVHIYYLEKANKIKSEKTHIHIFSFTGEEMATKADYTLDEESRARIKTRLFTIRQEMASRGLWDSFVSPREAKRQLKKDLKSQEQCAGLPTKVSHRTSPALKTLEPMWMDSNRTAALKASFLKCPKK</sequence>
<protein>
    <recommendedName>
        <fullName>Protein PA-X</fullName>
    </recommendedName>
</protein>
<feature type="chain" id="PRO_0000419421" description="Protein PA-X">
    <location>
        <begin position="1"/>
        <end position="252"/>
    </location>
</feature>
<feature type="active site" evidence="2">
    <location>
        <position position="80"/>
    </location>
</feature>
<feature type="active site" evidence="2">
    <location>
        <position position="108"/>
    </location>
</feature>
<feature type="site" description="Important for efficient shutoff activity and nuclear localization" evidence="4">
    <location>
        <position position="195"/>
    </location>
</feature>
<feature type="site" description="Important for efficient shutoff activity and nuclear localization" evidence="4">
    <location>
        <position position="198"/>
    </location>
</feature>
<feature type="site" description="Important for efficient shutoff activity and nuclear localization" evidence="4">
    <location>
        <position position="199"/>
    </location>
</feature>
<feature type="site" description="Important for efficient shutoff activity" evidence="3">
    <location>
        <position position="202"/>
    </location>
</feature>
<feature type="site" description="Important for efficient shutoff activity" evidence="3">
    <location>
        <position position="203"/>
    </location>
</feature>
<feature type="site" description="Important for efficient shutoff activity" evidence="3">
    <location>
        <position position="206"/>
    </location>
</feature>
<gene>
    <name type="primary">PA</name>
</gene>
<organism>
    <name type="scientific">Influenza A virus (strain A/Turkey/Ontario/6118/1968 H8N4)</name>
    <dbReference type="NCBI Taxonomy" id="311175"/>
    <lineage>
        <taxon>Viruses</taxon>
        <taxon>Riboviria</taxon>
        <taxon>Orthornavirae</taxon>
        <taxon>Negarnaviricota</taxon>
        <taxon>Polyploviricotina</taxon>
        <taxon>Insthoviricetes</taxon>
        <taxon>Articulavirales</taxon>
        <taxon>Orthomyxoviridae</taxon>
        <taxon>Alphainfluenzavirus</taxon>
        <taxon>Alphainfluenzavirus influenzae</taxon>
        <taxon>Influenza A virus</taxon>
    </lineage>
</organism>
<reference key="1">
    <citation type="journal article" date="2006" name="Science">
        <title>Large-scale sequence analysis of avian influenza isolates.</title>
        <authorList>
            <person name="Obenauer J.C."/>
            <person name="Denson J."/>
            <person name="Mehta P.K."/>
            <person name="Su X."/>
            <person name="Mukatira S."/>
            <person name="Finkelstein D.B."/>
            <person name="Xu X."/>
            <person name="Wang J."/>
            <person name="Ma J."/>
            <person name="Fan Y."/>
            <person name="Rakestraw K.M."/>
            <person name="Webster R.G."/>
            <person name="Hoffmann E."/>
            <person name="Krauss S."/>
            <person name="Zheng J."/>
            <person name="Zhang Z."/>
            <person name="Naeve C.W."/>
        </authorList>
    </citation>
    <scope>NUCLEOTIDE SEQUENCE [GENOMIC RNA]</scope>
</reference>
<dbReference type="EMBL" id="CY005830">
    <property type="status" value="NOT_ANNOTATED_CDS"/>
    <property type="molecule type" value="Genomic_RNA"/>
</dbReference>
<dbReference type="SMR" id="P0DJV8"/>
<dbReference type="Proteomes" id="UP000007770">
    <property type="component" value="Genome"/>
</dbReference>
<dbReference type="GO" id="GO:0003723">
    <property type="term" value="F:RNA binding"/>
    <property type="evidence" value="ECO:0007669"/>
    <property type="project" value="InterPro"/>
</dbReference>
<dbReference type="GO" id="GO:0039694">
    <property type="term" value="P:viral RNA genome replication"/>
    <property type="evidence" value="ECO:0007669"/>
    <property type="project" value="InterPro"/>
</dbReference>
<dbReference type="GO" id="GO:0075523">
    <property type="term" value="P:viral translational frameshifting"/>
    <property type="evidence" value="ECO:0007669"/>
    <property type="project" value="UniProtKB-KW"/>
</dbReference>
<dbReference type="FunFam" id="3.40.91.90:FF:000001">
    <property type="entry name" value="Polymerase acidic protein"/>
    <property type="match status" value="1"/>
</dbReference>
<dbReference type="Gene3D" id="3.40.91.90">
    <property type="entry name" value="Influenza RNA-dependent RNA polymerase subunit PA, endonuclease domain"/>
    <property type="match status" value="1"/>
</dbReference>
<dbReference type="InterPro" id="IPR001009">
    <property type="entry name" value="PA/PA-X"/>
</dbReference>
<dbReference type="InterPro" id="IPR038372">
    <property type="entry name" value="PA/PA-X_sf"/>
</dbReference>
<dbReference type="Pfam" id="PF00603">
    <property type="entry name" value="Flu_PA"/>
    <property type="match status" value="1"/>
</dbReference>
<organismHost>
    <name type="scientific">Aves</name>
    <dbReference type="NCBI Taxonomy" id="8782"/>
</organismHost>
<accession>P0DJV8</accession>
<name>PAX_I68A3</name>
<proteinExistence type="inferred from homology"/>
<keyword id="KW-1132">Decay of host mRNAs by virus</keyword>
<keyword id="KW-1262">Eukaryotic host gene expression shutoff by virus</keyword>
<keyword id="KW-1035">Host cytoplasm</keyword>
<keyword id="KW-1190">Host gene expression shutoff by virus</keyword>
<keyword id="KW-1192">Host mRNA suppression by virus</keyword>
<keyword id="KW-1048">Host nucleus</keyword>
<keyword id="KW-0945">Host-virus interaction</keyword>
<keyword id="KW-0688">Ribosomal frameshifting</keyword>